<dbReference type="EC" id="2.7.11.1"/>
<dbReference type="EMBL" id="AAFI02000023">
    <property type="protein sequence ID" value="EAL68427.1"/>
    <property type="molecule type" value="Genomic_DNA"/>
</dbReference>
<dbReference type="RefSeq" id="XP_642407.1">
    <property type="nucleotide sequence ID" value="XM_637315.1"/>
</dbReference>
<dbReference type="SMR" id="Q54XZ5"/>
<dbReference type="FunCoup" id="Q54XZ5">
    <property type="interactions" value="243"/>
</dbReference>
<dbReference type="STRING" id="44689.Q54XZ5"/>
<dbReference type="PaxDb" id="44689-DDB0220138"/>
<dbReference type="EnsemblProtists" id="EAL68427">
    <property type="protein sequence ID" value="EAL68427"/>
    <property type="gene ID" value="DDB_G0278509"/>
</dbReference>
<dbReference type="GeneID" id="8621612"/>
<dbReference type="KEGG" id="ddi:DDB_G0278509"/>
<dbReference type="dictyBase" id="DDB_G0278509">
    <property type="gene designation" value="lrrkB"/>
</dbReference>
<dbReference type="VEuPathDB" id="AmoebaDB:DDB_G0278509"/>
<dbReference type="eggNOG" id="KOG0192">
    <property type="taxonomic scope" value="Eukaryota"/>
</dbReference>
<dbReference type="eggNOG" id="KOG0619">
    <property type="taxonomic scope" value="Eukaryota"/>
</dbReference>
<dbReference type="HOGENOM" id="CLU_266059_0_0_1"/>
<dbReference type="InParanoid" id="Q54XZ5"/>
<dbReference type="OMA" id="EYEIADC"/>
<dbReference type="PhylomeDB" id="Q54XZ5"/>
<dbReference type="PRO" id="PR:Q54XZ5"/>
<dbReference type="Proteomes" id="UP000002195">
    <property type="component" value="Chromosome 3"/>
</dbReference>
<dbReference type="GO" id="GO:0005524">
    <property type="term" value="F:ATP binding"/>
    <property type="evidence" value="ECO:0007669"/>
    <property type="project" value="UniProtKB-KW"/>
</dbReference>
<dbReference type="GO" id="GO:0106310">
    <property type="term" value="F:protein serine kinase activity"/>
    <property type="evidence" value="ECO:0007669"/>
    <property type="project" value="RHEA"/>
</dbReference>
<dbReference type="GO" id="GO:0004674">
    <property type="term" value="F:protein serine/threonine kinase activity"/>
    <property type="evidence" value="ECO:0007669"/>
    <property type="project" value="UniProtKB-KW"/>
</dbReference>
<dbReference type="CDD" id="cd13999">
    <property type="entry name" value="STKc_MAP3K-like"/>
    <property type="match status" value="1"/>
</dbReference>
<dbReference type="FunFam" id="1.10.510.10:FF:002937">
    <property type="match status" value="1"/>
</dbReference>
<dbReference type="FunFam" id="3.30.200.20:FF:000618">
    <property type="entry name" value="Serine/threonine-protein kinase CTR1"/>
    <property type="match status" value="1"/>
</dbReference>
<dbReference type="Gene3D" id="3.30.200.20">
    <property type="entry name" value="Phosphorylase Kinase, domain 1"/>
    <property type="match status" value="1"/>
</dbReference>
<dbReference type="Gene3D" id="3.80.10.10">
    <property type="entry name" value="Ribonuclease Inhibitor"/>
    <property type="match status" value="3"/>
</dbReference>
<dbReference type="Gene3D" id="1.10.510.10">
    <property type="entry name" value="Transferase(Phosphotransferase) domain 1"/>
    <property type="match status" value="1"/>
</dbReference>
<dbReference type="InterPro" id="IPR011009">
    <property type="entry name" value="Kinase-like_dom_sf"/>
</dbReference>
<dbReference type="InterPro" id="IPR001611">
    <property type="entry name" value="Leu-rich_rpt"/>
</dbReference>
<dbReference type="InterPro" id="IPR025875">
    <property type="entry name" value="Leu-rich_rpt_4"/>
</dbReference>
<dbReference type="InterPro" id="IPR003591">
    <property type="entry name" value="Leu-rich_rpt_typical-subtyp"/>
</dbReference>
<dbReference type="InterPro" id="IPR032675">
    <property type="entry name" value="LRR_dom_sf"/>
</dbReference>
<dbReference type="InterPro" id="IPR050647">
    <property type="entry name" value="Plant_LRR-RLKs"/>
</dbReference>
<dbReference type="InterPro" id="IPR000719">
    <property type="entry name" value="Prot_kinase_dom"/>
</dbReference>
<dbReference type="InterPro" id="IPR017441">
    <property type="entry name" value="Protein_kinase_ATP_BS"/>
</dbReference>
<dbReference type="InterPro" id="IPR001245">
    <property type="entry name" value="Ser-Thr/Tyr_kinase_cat_dom"/>
</dbReference>
<dbReference type="InterPro" id="IPR008271">
    <property type="entry name" value="Ser/Thr_kinase_AS"/>
</dbReference>
<dbReference type="PANTHER" id="PTHR48056">
    <property type="entry name" value="LRR RECEPTOR-LIKE SERINE/THREONINE-PROTEIN KINASE-RELATED"/>
    <property type="match status" value="1"/>
</dbReference>
<dbReference type="PANTHER" id="PTHR48056:SF81">
    <property type="entry name" value="RECEPTOR PROTEIN-TYROSINE KINASE CEPR1"/>
    <property type="match status" value="1"/>
</dbReference>
<dbReference type="Pfam" id="PF00560">
    <property type="entry name" value="LRR_1"/>
    <property type="match status" value="2"/>
</dbReference>
<dbReference type="Pfam" id="PF12799">
    <property type="entry name" value="LRR_4"/>
    <property type="match status" value="1"/>
</dbReference>
<dbReference type="Pfam" id="PF13855">
    <property type="entry name" value="LRR_8"/>
    <property type="match status" value="2"/>
</dbReference>
<dbReference type="Pfam" id="PF07714">
    <property type="entry name" value="PK_Tyr_Ser-Thr"/>
    <property type="match status" value="2"/>
</dbReference>
<dbReference type="PRINTS" id="PR00019">
    <property type="entry name" value="LEURICHRPT"/>
</dbReference>
<dbReference type="SMART" id="SM00364">
    <property type="entry name" value="LRR_BAC"/>
    <property type="match status" value="9"/>
</dbReference>
<dbReference type="SMART" id="SM00365">
    <property type="entry name" value="LRR_SD22"/>
    <property type="match status" value="7"/>
</dbReference>
<dbReference type="SMART" id="SM00369">
    <property type="entry name" value="LRR_TYP"/>
    <property type="match status" value="12"/>
</dbReference>
<dbReference type="SMART" id="SM00220">
    <property type="entry name" value="S_TKc"/>
    <property type="match status" value="1"/>
</dbReference>
<dbReference type="SUPFAM" id="SSF52058">
    <property type="entry name" value="L domain-like"/>
    <property type="match status" value="1"/>
</dbReference>
<dbReference type="SUPFAM" id="SSF56112">
    <property type="entry name" value="Protein kinase-like (PK-like)"/>
    <property type="match status" value="1"/>
</dbReference>
<dbReference type="PROSITE" id="PS51450">
    <property type="entry name" value="LRR"/>
    <property type="match status" value="12"/>
</dbReference>
<dbReference type="PROSITE" id="PS00107">
    <property type="entry name" value="PROTEIN_KINASE_ATP"/>
    <property type="match status" value="1"/>
</dbReference>
<dbReference type="PROSITE" id="PS50011">
    <property type="entry name" value="PROTEIN_KINASE_DOM"/>
    <property type="match status" value="1"/>
</dbReference>
<dbReference type="PROSITE" id="PS00108">
    <property type="entry name" value="PROTEIN_KINASE_ST"/>
    <property type="match status" value="1"/>
</dbReference>
<sequence>MSKVIGYIDYGDPDGNEEPSKQNGEYIDYSNENGYNAYHSVNGGYDKDNNNHHHHNQEEDYDYDNNTHVNYLTTKHSQFQLSRGRLYQGHQSSHIIYPHQSYKLSNSGESMNRSINQSKEEDHLENSLHDDEYLYGYEDHHDDQASSISQESSQGLDETDFDNIDKYFESNQHLLLQTLQNNNNNNSNSNSNSNSNSNNNNNNNNNNNNNNNNNNNTKNNITDENQLEIHLNDLSIDSDNSNNKINKQYVNSDNSNNNNSNNSNNNNIGSNINSNCNIENEKNSNNTDDNNNNNNIENVNKINIEDNNNNNNNNNNNNNNNNNNNNNNNNNNNNNNNKIEVISNKPIQLFSDYDPPILTTSTSTSQSKIKTQQPFLFFSSNYLNSSSTELDLSEQELNEFPIFDEKEIVQGYKIIDLSFNNIKSIPLDAFTNISNLEQLIMFNNNLSDVPSSIEFLKHLTILDLSHNNLHEICRELGNLSFLRELYLSNNSLKKFPTTGNLYNLKKLILDNNQITTIPIECVEPLIQLQTLDLSFNKIGTITSSTTTTTTTTTTNNNNNNGGGGSIYQKMKNLKQLNLSHNELQEIPSSLRHLSKLHSLSIDYNQISVLPDKVVASLSRLAKLTISNNKIKQLPFAINNLSSLIELNASNNVIELLPDSICYLSNLKKLNLNNNNLKELPSNIGFLTKLVDLQLYNNQISSLPISFLKCRSIREIGTDGNPLPSYYHLGIKAIRYHIKNPDCDLDDLNSISPTIDSSTIEQQQQPIQLFGGGNYIDSSNNNGNESFCNSGELSPLTDSLECIEMPPPMQISENLRKPLNVNSPSYPFQKLDPIPQSLYSSSNPRSHTESDIQKLKNNDETITTTNSSISTTSSPPSLLFGVSINGNGIISTTTTTTTTTTTTNGKTLSRQSSFQQIPQQFNLSTSTTNITKLPRIKYTWEIDFDEIQFFNLIGQGGFSKVYHGVWRSKDVAIKQIELQNNKSLDDFRREVGILSKLKPHENLLAYYGACKHANYCYIITEYLPRGSLHDLLHREQLMKLDFKQKVSFAICVALGCYHLSTYEPPIYHTDLKTKNLLVTNALKIKIADFGLASFAKKSLTTIINNNNNTNNTATSSTTTSSANGANSISNNNNNGTTSVDQSRLAYAFYAAPEILNSKHFSEKSDVFSFGTILWELVTNKIPFDGMDPYEVKELLKSGKRLEIPENCNEVLKNIIQDCWNQQSEDRPTFLSIYHRLENLMKSITKKRRF</sequence>
<gene>
    <name type="ORF">DDB_G0278509</name>
</gene>
<proteinExistence type="inferred from homology"/>
<accession>Q54XZ5</accession>
<name>Y0138_DICDI</name>
<organism>
    <name type="scientific">Dictyostelium discoideum</name>
    <name type="common">Social amoeba</name>
    <dbReference type="NCBI Taxonomy" id="44689"/>
    <lineage>
        <taxon>Eukaryota</taxon>
        <taxon>Amoebozoa</taxon>
        <taxon>Evosea</taxon>
        <taxon>Eumycetozoa</taxon>
        <taxon>Dictyostelia</taxon>
        <taxon>Dictyosteliales</taxon>
        <taxon>Dictyosteliaceae</taxon>
        <taxon>Dictyostelium</taxon>
    </lineage>
</organism>
<reference key="1">
    <citation type="journal article" date="2005" name="Nature">
        <title>The genome of the social amoeba Dictyostelium discoideum.</title>
        <authorList>
            <person name="Eichinger L."/>
            <person name="Pachebat J.A."/>
            <person name="Gloeckner G."/>
            <person name="Rajandream M.A."/>
            <person name="Sucgang R."/>
            <person name="Berriman M."/>
            <person name="Song J."/>
            <person name="Olsen R."/>
            <person name="Szafranski K."/>
            <person name="Xu Q."/>
            <person name="Tunggal B."/>
            <person name="Kummerfeld S."/>
            <person name="Madera M."/>
            <person name="Konfortov B.A."/>
            <person name="Rivero F."/>
            <person name="Bankier A.T."/>
            <person name="Lehmann R."/>
            <person name="Hamlin N."/>
            <person name="Davies R."/>
            <person name="Gaudet P."/>
            <person name="Fey P."/>
            <person name="Pilcher K."/>
            <person name="Chen G."/>
            <person name="Saunders D."/>
            <person name="Sodergren E.J."/>
            <person name="Davis P."/>
            <person name="Kerhornou A."/>
            <person name="Nie X."/>
            <person name="Hall N."/>
            <person name="Anjard C."/>
            <person name="Hemphill L."/>
            <person name="Bason N."/>
            <person name="Farbrother P."/>
            <person name="Desany B."/>
            <person name="Just E."/>
            <person name="Morio T."/>
            <person name="Rost R."/>
            <person name="Churcher C.M."/>
            <person name="Cooper J."/>
            <person name="Haydock S."/>
            <person name="van Driessche N."/>
            <person name="Cronin A."/>
            <person name="Goodhead I."/>
            <person name="Muzny D.M."/>
            <person name="Mourier T."/>
            <person name="Pain A."/>
            <person name="Lu M."/>
            <person name="Harper D."/>
            <person name="Lindsay R."/>
            <person name="Hauser H."/>
            <person name="James K.D."/>
            <person name="Quiles M."/>
            <person name="Madan Babu M."/>
            <person name="Saito T."/>
            <person name="Buchrieser C."/>
            <person name="Wardroper A."/>
            <person name="Felder M."/>
            <person name="Thangavelu M."/>
            <person name="Johnson D."/>
            <person name="Knights A."/>
            <person name="Loulseged H."/>
            <person name="Mungall K.L."/>
            <person name="Oliver K."/>
            <person name="Price C."/>
            <person name="Quail M.A."/>
            <person name="Urushihara H."/>
            <person name="Hernandez J."/>
            <person name="Rabbinowitsch E."/>
            <person name="Steffen D."/>
            <person name="Sanders M."/>
            <person name="Ma J."/>
            <person name="Kohara Y."/>
            <person name="Sharp S."/>
            <person name="Simmonds M.N."/>
            <person name="Spiegler S."/>
            <person name="Tivey A."/>
            <person name="Sugano S."/>
            <person name="White B."/>
            <person name="Walker D."/>
            <person name="Woodward J.R."/>
            <person name="Winckler T."/>
            <person name="Tanaka Y."/>
            <person name="Shaulsky G."/>
            <person name="Schleicher M."/>
            <person name="Weinstock G.M."/>
            <person name="Rosenthal A."/>
            <person name="Cox E.C."/>
            <person name="Chisholm R.L."/>
            <person name="Gibbs R.A."/>
            <person name="Loomis W.F."/>
            <person name="Platzer M."/>
            <person name="Kay R.R."/>
            <person name="Williams J.G."/>
            <person name="Dear P.H."/>
            <person name="Noegel A.A."/>
            <person name="Barrell B.G."/>
            <person name="Kuspa A."/>
        </authorList>
    </citation>
    <scope>NUCLEOTIDE SEQUENCE [LARGE SCALE GENOMIC DNA]</scope>
    <source>
        <strain>AX4</strain>
    </source>
</reference>
<evidence type="ECO:0000255" key="1">
    <source>
        <dbReference type="PROSITE-ProRule" id="PRU00159"/>
    </source>
</evidence>
<evidence type="ECO:0000255" key="2">
    <source>
        <dbReference type="PROSITE-ProRule" id="PRU10027"/>
    </source>
</evidence>
<evidence type="ECO:0000256" key="3">
    <source>
        <dbReference type="SAM" id="MobiDB-lite"/>
    </source>
</evidence>
<evidence type="ECO:0000305" key="4"/>
<keyword id="KW-0067">ATP-binding</keyword>
<keyword id="KW-0418">Kinase</keyword>
<keyword id="KW-0433">Leucine-rich repeat</keyword>
<keyword id="KW-0547">Nucleotide-binding</keyword>
<keyword id="KW-1185">Reference proteome</keyword>
<keyword id="KW-0677">Repeat</keyword>
<keyword id="KW-0723">Serine/threonine-protein kinase</keyword>
<keyword id="KW-0808">Transferase</keyword>
<protein>
    <recommendedName>
        <fullName>Probable serine/threonine-protein kinase DDB_G0278509</fullName>
        <ecNumber>2.7.11.1</ecNumber>
    </recommendedName>
</protein>
<comment type="catalytic activity">
    <reaction>
        <text>L-seryl-[protein] + ATP = O-phospho-L-seryl-[protein] + ADP + H(+)</text>
        <dbReference type="Rhea" id="RHEA:17989"/>
        <dbReference type="Rhea" id="RHEA-COMP:9863"/>
        <dbReference type="Rhea" id="RHEA-COMP:11604"/>
        <dbReference type="ChEBI" id="CHEBI:15378"/>
        <dbReference type="ChEBI" id="CHEBI:29999"/>
        <dbReference type="ChEBI" id="CHEBI:30616"/>
        <dbReference type="ChEBI" id="CHEBI:83421"/>
        <dbReference type="ChEBI" id="CHEBI:456216"/>
        <dbReference type="EC" id="2.7.11.1"/>
    </reaction>
</comment>
<comment type="catalytic activity">
    <reaction>
        <text>L-threonyl-[protein] + ATP = O-phospho-L-threonyl-[protein] + ADP + H(+)</text>
        <dbReference type="Rhea" id="RHEA:46608"/>
        <dbReference type="Rhea" id="RHEA-COMP:11060"/>
        <dbReference type="Rhea" id="RHEA-COMP:11605"/>
        <dbReference type="ChEBI" id="CHEBI:15378"/>
        <dbReference type="ChEBI" id="CHEBI:30013"/>
        <dbReference type="ChEBI" id="CHEBI:30616"/>
        <dbReference type="ChEBI" id="CHEBI:61977"/>
        <dbReference type="ChEBI" id="CHEBI:456216"/>
        <dbReference type="EC" id="2.7.11.1"/>
    </reaction>
</comment>
<comment type="similarity">
    <text evidence="4">Belongs to the protein kinase superfamily. TKL Ser/Thr protein kinase family.</text>
</comment>
<feature type="chain" id="PRO_0000355153" description="Probable serine/threonine-protein kinase DDB_G0278509">
    <location>
        <begin position="1"/>
        <end position="1248"/>
    </location>
</feature>
<feature type="repeat" description="LRR 1">
    <location>
        <begin position="386"/>
        <end position="407"/>
    </location>
</feature>
<feature type="repeat" description="LRR 2">
    <location>
        <begin position="411"/>
        <end position="432"/>
    </location>
</feature>
<feature type="repeat" description="LRR 3">
    <location>
        <begin position="435"/>
        <end position="457"/>
    </location>
</feature>
<feature type="repeat" description="LRR 4">
    <location>
        <begin position="458"/>
        <end position="480"/>
    </location>
</feature>
<feature type="repeat" description="LRR 5">
    <location>
        <begin position="481"/>
        <end position="502"/>
    </location>
</feature>
<feature type="repeat" description="LRR 6">
    <location>
        <begin position="503"/>
        <end position="524"/>
    </location>
</feature>
<feature type="repeat" description="LRR 7">
    <location>
        <begin position="527"/>
        <end position="548"/>
    </location>
</feature>
<feature type="repeat" description="LRR 8">
    <location>
        <begin position="572"/>
        <end position="593"/>
    </location>
</feature>
<feature type="repeat" description="LRR 9">
    <location>
        <begin position="595"/>
        <end position="616"/>
    </location>
</feature>
<feature type="repeat" description="LRR 10">
    <location>
        <begin position="619"/>
        <end position="641"/>
    </location>
</feature>
<feature type="repeat" description="LRR 11">
    <location>
        <begin position="642"/>
        <end position="663"/>
    </location>
</feature>
<feature type="repeat" description="LRR 12">
    <location>
        <begin position="665"/>
        <end position="687"/>
    </location>
</feature>
<feature type="repeat" description="LRR 13">
    <location>
        <begin position="688"/>
        <end position="708"/>
    </location>
</feature>
<feature type="domain" description="Protein kinase" evidence="1">
    <location>
        <begin position="946"/>
        <end position="1239"/>
    </location>
</feature>
<feature type="region of interest" description="Disordered" evidence="3">
    <location>
        <begin position="1"/>
        <end position="26"/>
    </location>
</feature>
<feature type="region of interest" description="Disordered" evidence="3">
    <location>
        <begin position="40"/>
        <end position="61"/>
    </location>
</feature>
<feature type="region of interest" description="Disordered" evidence="3">
    <location>
        <begin position="100"/>
        <end position="125"/>
    </location>
</feature>
<feature type="region of interest" description="Disordered" evidence="3">
    <location>
        <begin position="180"/>
        <end position="220"/>
    </location>
</feature>
<feature type="region of interest" description="Disordered" evidence="3">
    <location>
        <begin position="235"/>
        <end position="338"/>
    </location>
</feature>
<feature type="region of interest" description="Disordered" evidence="3">
    <location>
        <begin position="825"/>
        <end position="873"/>
    </location>
</feature>
<feature type="region of interest" description="Disordered" evidence="3">
    <location>
        <begin position="1106"/>
        <end position="1135"/>
    </location>
</feature>
<feature type="compositionally biased region" description="Polar residues" evidence="3">
    <location>
        <begin position="102"/>
        <end position="117"/>
    </location>
</feature>
<feature type="compositionally biased region" description="Low complexity" evidence="3">
    <location>
        <begin position="181"/>
        <end position="216"/>
    </location>
</feature>
<feature type="compositionally biased region" description="Basic and acidic residues" evidence="3">
    <location>
        <begin position="845"/>
        <end position="858"/>
    </location>
</feature>
<feature type="compositionally biased region" description="Low complexity" evidence="3">
    <location>
        <begin position="860"/>
        <end position="873"/>
    </location>
</feature>
<feature type="active site" description="Proton acceptor" evidence="1 2">
    <location>
        <position position="1069"/>
    </location>
</feature>
<feature type="binding site" evidence="1">
    <location>
        <begin position="952"/>
        <end position="960"/>
    </location>
    <ligand>
        <name>ATP</name>
        <dbReference type="ChEBI" id="CHEBI:30616"/>
    </ligand>
</feature>
<feature type="binding site" evidence="1">
    <location>
        <position position="973"/>
    </location>
    <ligand>
        <name>ATP</name>
        <dbReference type="ChEBI" id="CHEBI:30616"/>
    </ligand>
</feature>